<reference key="1">
    <citation type="journal article" date="1995" name="Gene">
        <title>A gene encoding gamma-adaptin is required for apical extension growth in Ustilago maydis.</title>
        <authorList>
            <person name="Keon J.P.R."/>
            <person name="Jewitt S."/>
            <person name="Hargreaves J.A."/>
        </authorList>
    </citation>
    <scope>NUCLEOTIDE SEQUENCE [GENOMIC DNA]</scope>
    <source>
        <strain>IMI 103761</strain>
    </source>
</reference>
<reference key="2">
    <citation type="journal article" date="2006" name="Nature">
        <title>Insights from the genome of the biotrophic fungal plant pathogen Ustilago maydis.</title>
        <authorList>
            <person name="Kaemper J."/>
            <person name="Kahmann R."/>
            <person name="Boelker M."/>
            <person name="Ma L.-J."/>
            <person name="Brefort T."/>
            <person name="Saville B.J."/>
            <person name="Banuett F."/>
            <person name="Kronstad J.W."/>
            <person name="Gold S.E."/>
            <person name="Mueller O."/>
            <person name="Perlin M.H."/>
            <person name="Woesten H.A.B."/>
            <person name="de Vries R."/>
            <person name="Ruiz-Herrera J."/>
            <person name="Reynaga-Pena C.G."/>
            <person name="Snetselaar K."/>
            <person name="McCann M."/>
            <person name="Perez-Martin J."/>
            <person name="Feldbruegge M."/>
            <person name="Basse C.W."/>
            <person name="Steinberg G."/>
            <person name="Ibeas J.I."/>
            <person name="Holloman W."/>
            <person name="Guzman P."/>
            <person name="Farman M.L."/>
            <person name="Stajich J.E."/>
            <person name="Sentandreu R."/>
            <person name="Gonzalez-Prieto J.M."/>
            <person name="Kennell J.C."/>
            <person name="Molina L."/>
            <person name="Schirawski J."/>
            <person name="Mendoza-Mendoza A."/>
            <person name="Greilinger D."/>
            <person name="Muench K."/>
            <person name="Roessel N."/>
            <person name="Scherer M."/>
            <person name="Vranes M."/>
            <person name="Ladendorf O."/>
            <person name="Vincon V."/>
            <person name="Fuchs U."/>
            <person name="Sandrock B."/>
            <person name="Meng S."/>
            <person name="Ho E.C.H."/>
            <person name="Cahill M.J."/>
            <person name="Boyce K.J."/>
            <person name="Klose J."/>
            <person name="Klosterman S.J."/>
            <person name="Deelstra H.J."/>
            <person name="Ortiz-Castellanos L."/>
            <person name="Li W."/>
            <person name="Sanchez-Alonso P."/>
            <person name="Schreier P.H."/>
            <person name="Haeuser-Hahn I."/>
            <person name="Vaupel M."/>
            <person name="Koopmann E."/>
            <person name="Friedrich G."/>
            <person name="Voss H."/>
            <person name="Schlueter T."/>
            <person name="Margolis J."/>
            <person name="Platt D."/>
            <person name="Swimmer C."/>
            <person name="Gnirke A."/>
            <person name="Chen F."/>
            <person name="Vysotskaia V."/>
            <person name="Mannhaupt G."/>
            <person name="Gueldener U."/>
            <person name="Muensterkoetter M."/>
            <person name="Haase D."/>
            <person name="Oesterheld M."/>
            <person name="Mewes H.-W."/>
            <person name="Mauceli E.W."/>
            <person name="DeCaprio D."/>
            <person name="Wade C.M."/>
            <person name="Butler J."/>
            <person name="Young S.K."/>
            <person name="Jaffe D.B."/>
            <person name="Calvo S.E."/>
            <person name="Nusbaum C."/>
            <person name="Galagan J.E."/>
            <person name="Birren B.W."/>
        </authorList>
    </citation>
    <scope>NUCLEOTIDE SEQUENCE [LARGE SCALE GENOMIC DNA]</scope>
    <source>
        <strain>DSM 14603 / FGSC 9021 / UM521</strain>
    </source>
</reference>
<reference key="3">
    <citation type="submission" date="2014-09" db="EMBL/GenBank/DDBJ databases">
        <authorList>
            <person name="Gueldener U."/>
            <person name="Muensterkoetter M."/>
            <person name="Walter M.C."/>
            <person name="Mannhaupt G."/>
            <person name="Kahmann R."/>
        </authorList>
    </citation>
    <scope>GENOME REANNOTATION</scope>
    <source>
        <strain>DSM 14603 / FGSC 9021 / UM521</strain>
    </source>
</reference>
<name>AP1G1_MYCMD</name>
<feature type="chain" id="PRO_0000193763" description="AP-1 complex subunit gamma-1">
    <location>
        <begin position="1"/>
        <end position="874"/>
    </location>
</feature>
<feature type="domain" description="GAE" evidence="2">
    <location>
        <begin position="761"/>
        <end position="873"/>
    </location>
</feature>
<feature type="sequence conflict" description="In Ref. 1; CAA86825." evidence="3" ref="1">
    <original>S</original>
    <variation>T</variation>
    <location>
        <position position="248"/>
    </location>
</feature>
<proteinExistence type="inferred from homology"/>
<comment type="function">
    <text evidence="1">Adaptins are components of the adaptor complexes which link clathrin to receptors in coated vesicles. Clathrin-associated protein complexes are believed to interact with the cytoplasmic tails of membrane proteins, leading to their selection and concentration. The AP-1 complex interacts directly with clathrin (By similarity). Required for apical growth extension.</text>
</comment>
<comment type="subunit">
    <text evidence="1">Adaptor protein complex 1 (AP-1) is a heterotetramer composed of two large adaptins (gamma-type subunit APL4 and beta-type subunit APL2), a medium adaptin (mu-type subunit APM1) and a small adaptin (sigma-type subunit APS1). AP-1 interacts with clathrin (By similarity).</text>
</comment>
<comment type="subcellular location">
    <subcellularLocation>
        <location evidence="1">Cytoplasmic vesicle</location>
        <location evidence="1">Clathrin-coated vesicle membrane</location>
        <topology evidence="1">Peripheral membrane protein</topology>
        <orientation evidence="1">Cytoplasmic side</orientation>
    </subcellularLocation>
    <subcellularLocation>
        <location evidence="1">Golgi apparatus</location>
    </subcellularLocation>
    <text evidence="1">Component of the coat surrounding the cytoplasmic face of coated vesicles located at the Golgi complex.</text>
</comment>
<comment type="similarity">
    <text evidence="3">Belongs to the adaptor complexes large subunit family.</text>
</comment>
<comment type="sequence caution" evidence="3">
    <conflict type="erroneous initiation">
        <sequence resource="EMBL-CDS" id="CAA86825"/>
    </conflict>
    <text>Truncated N-terminus.</text>
</comment>
<gene>
    <name type="primary">APL4</name>
    <name type="ORF">UMAG_00660</name>
</gene>
<organism>
    <name type="scientific">Mycosarcoma maydis</name>
    <name type="common">Corn smut fungus</name>
    <name type="synonym">Ustilago maydis</name>
    <dbReference type="NCBI Taxonomy" id="5270"/>
    <lineage>
        <taxon>Eukaryota</taxon>
        <taxon>Fungi</taxon>
        <taxon>Dikarya</taxon>
        <taxon>Basidiomycota</taxon>
        <taxon>Ustilaginomycotina</taxon>
        <taxon>Ustilaginomycetes</taxon>
        <taxon>Ustilaginales</taxon>
        <taxon>Ustilaginaceae</taxon>
        <taxon>Mycosarcoma</taxon>
    </lineage>
</organism>
<dbReference type="EMBL" id="Z46804">
    <property type="protein sequence ID" value="CAA86825.1"/>
    <property type="status" value="ALT_INIT"/>
    <property type="molecule type" value="Genomic_DNA"/>
</dbReference>
<dbReference type="EMBL" id="CM003140">
    <property type="protein sequence ID" value="KIS72247.1"/>
    <property type="molecule type" value="Genomic_DNA"/>
</dbReference>
<dbReference type="PIR" id="S49876">
    <property type="entry name" value="S49876"/>
</dbReference>
<dbReference type="RefSeq" id="XP_011386466.1">
    <property type="nucleotide sequence ID" value="XM_011388164.1"/>
</dbReference>
<dbReference type="SMR" id="Q99128"/>
<dbReference type="FunCoup" id="Q99128">
    <property type="interactions" value="204"/>
</dbReference>
<dbReference type="STRING" id="237631.Q99128"/>
<dbReference type="EnsemblFungi" id="KIS72247">
    <property type="protein sequence ID" value="KIS72247"/>
    <property type="gene ID" value="UMAG_00660"/>
</dbReference>
<dbReference type="GeneID" id="23561899"/>
<dbReference type="KEGG" id="uma:UMAG_00660"/>
<dbReference type="VEuPathDB" id="FungiDB:UMAG_00660"/>
<dbReference type="eggNOG" id="KOG1062">
    <property type="taxonomic scope" value="Eukaryota"/>
</dbReference>
<dbReference type="HOGENOM" id="CLU_003824_0_0_1"/>
<dbReference type="InParanoid" id="Q99128"/>
<dbReference type="OrthoDB" id="28053at2759"/>
<dbReference type="Proteomes" id="UP000000561">
    <property type="component" value="Chromosome 1"/>
</dbReference>
<dbReference type="GO" id="GO:0030121">
    <property type="term" value="C:AP-1 adaptor complex"/>
    <property type="evidence" value="ECO:0000318"/>
    <property type="project" value="GO_Central"/>
</dbReference>
<dbReference type="GO" id="GO:0005829">
    <property type="term" value="C:cytosol"/>
    <property type="evidence" value="ECO:0007669"/>
    <property type="project" value="GOC"/>
</dbReference>
<dbReference type="GO" id="GO:0035615">
    <property type="term" value="F:clathrin adaptor activity"/>
    <property type="evidence" value="ECO:0000318"/>
    <property type="project" value="GO_Central"/>
</dbReference>
<dbReference type="GO" id="GO:0016482">
    <property type="term" value="P:cytosolic transport"/>
    <property type="evidence" value="ECO:0007669"/>
    <property type="project" value="UniProtKB-ARBA"/>
</dbReference>
<dbReference type="GO" id="GO:0016197">
    <property type="term" value="P:endosomal transport"/>
    <property type="evidence" value="ECO:0007669"/>
    <property type="project" value="UniProtKB-ARBA"/>
</dbReference>
<dbReference type="GO" id="GO:0006896">
    <property type="term" value="P:Golgi to vacuole transport"/>
    <property type="evidence" value="ECO:0000318"/>
    <property type="project" value="GO_Central"/>
</dbReference>
<dbReference type="GO" id="GO:0006886">
    <property type="term" value="P:intracellular protein transport"/>
    <property type="evidence" value="ECO:0007669"/>
    <property type="project" value="InterPro"/>
</dbReference>
<dbReference type="FunFam" id="1.25.10.10:FF:000030">
    <property type="entry name" value="AP-1 complex subunit gamma"/>
    <property type="match status" value="1"/>
</dbReference>
<dbReference type="Gene3D" id="2.60.40.1230">
    <property type="match status" value="1"/>
</dbReference>
<dbReference type="Gene3D" id="1.25.10.10">
    <property type="entry name" value="Leucine-rich Repeat Variant"/>
    <property type="match status" value="1"/>
</dbReference>
<dbReference type="InterPro" id="IPR050840">
    <property type="entry name" value="Adaptor_Complx_Large_Subunit"/>
</dbReference>
<dbReference type="InterPro" id="IPR017107">
    <property type="entry name" value="AP1_complex_gsu"/>
</dbReference>
<dbReference type="InterPro" id="IPR011989">
    <property type="entry name" value="ARM-like"/>
</dbReference>
<dbReference type="InterPro" id="IPR016024">
    <property type="entry name" value="ARM-type_fold"/>
</dbReference>
<dbReference type="InterPro" id="IPR002553">
    <property type="entry name" value="Clathrin/coatomer_adapt-like_N"/>
</dbReference>
<dbReference type="InterPro" id="IPR008152">
    <property type="entry name" value="Clathrin_a/b/g-adaptin_app_Ig"/>
</dbReference>
<dbReference type="InterPro" id="IPR013041">
    <property type="entry name" value="Clathrin_app_Ig-like_sf"/>
</dbReference>
<dbReference type="InterPro" id="IPR008153">
    <property type="entry name" value="GAE_dom"/>
</dbReference>
<dbReference type="PANTHER" id="PTHR22780">
    <property type="entry name" value="ADAPTIN, ALPHA/GAMMA/EPSILON"/>
    <property type="match status" value="1"/>
</dbReference>
<dbReference type="Pfam" id="PF01602">
    <property type="entry name" value="Adaptin_N"/>
    <property type="match status" value="1"/>
</dbReference>
<dbReference type="Pfam" id="PF02883">
    <property type="entry name" value="Alpha_adaptinC2"/>
    <property type="match status" value="1"/>
</dbReference>
<dbReference type="PIRSF" id="PIRSF037094">
    <property type="entry name" value="AP1_complex_gamma"/>
    <property type="match status" value="1"/>
</dbReference>
<dbReference type="SMART" id="SM00809">
    <property type="entry name" value="Alpha_adaptinC2"/>
    <property type="match status" value="1"/>
</dbReference>
<dbReference type="SUPFAM" id="SSF48371">
    <property type="entry name" value="ARM repeat"/>
    <property type="match status" value="1"/>
</dbReference>
<dbReference type="SUPFAM" id="SSF49348">
    <property type="entry name" value="Clathrin adaptor appendage domain"/>
    <property type="match status" value="1"/>
</dbReference>
<dbReference type="PROSITE" id="PS50180">
    <property type="entry name" value="GAE"/>
    <property type="match status" value="1"/>
</dbReference>
<evidence type="ECO:0000250" key="1"/>
<evidence type="ECO:0000255" key="2">
    <source>
        <dbReference type="PROSITE-ProRule" id="PRU00093"/>
    </source>
</evidence>
<evidence type="ECO:0000305" key="3"/>
<sequence length="874" mass="95075">MSTFFQKQQQVAALDPRLGGLMASAGLYNLKALIKAIRSCKTLADERSLIQKESASIRTAFKDEDPFARHNNIAKLLYIHMLGYPAHFGQIECLKLVATPRFTDKRLGYLGIMLLLDENTEVLTLVTNGLKNDMEHSNMYVCGLALCTFANIASEEMSRDLCNEIEKLMGSSNTYIRRKAAICAMRIVRKVPDLIDHFVDRTQQLLSDKNHGVLLCAVTLAIEICRQDDEALTVYRRAVPLLVQHLKSLVTTGYSPEHDVSGITDPFLQVKILRLLRILGKENAQASETMNDILAQVATNTEASKNVGNSILYETVLTILEIDADNGLRVMAINILGKFLSNRDNNIRYVALNTLSKVVSMDTNAVQRHRNIILDCLRDGDISIRRRALELSYALINESNVRVLTRELLSFLEVADNEFKLGMTTQICLAAEKFAPNKRWHIDTVLRVLKLAGNYVREEILSAFIRLVCHTPELQAYTVQKLFSGLHQDFSQESLTLAAVWVIGEFGDVLIQGGNFEDEELVREVQPKDVVDLLSSVLDSPYVNGLIRQFVLTSLAKLHTRLSDASQQSRIEQIIASFETSVEVEIQQRSVEFATLLKRSDIRQGVLESMPPPEIKQTVLGTVSEAKPVGSTRSDKDALLDLMGDEMPVTSGGGTGADNAPSGATQQSTHDLLADIFGGGDMGGMPSAAPAASASAAQKPKSSVNDILGLFGDGASAPAAAAQQAPTPAPAATSSYGGLDLLGGLGASSSASTPAATPASTVAKSHTVYTKHGLTITLTPTTNPARPEIVHITARFTSATSAISNINFQAAVPKTHKLQMQAISNSTVHPDSTETQPLRVMVPPGAAVRLRLRIAFQVDGHSVQDQTDWAQPSA</sequence>
<keyword id="KW-0968">Cytoplasmic vesicle</keyword>
<keyword id="KW-0333">Golgi apparatus</keyword>
<keyword id="KW-0472">Membrane</keyword>
<keyword id="KW-0653">Protein transport</keyword>
<keyword id="KW-1185">Reference proteome</keyword>
<keyword id="KW-0813">Transport</keyword>
<protein>
    <recommendedName>
        <fullName>AP-1 complex subunit gamma-1</fullName>
    </recommendedName>
    <alternativeName>
        <fullName>Clathrin assembly protein complex 1 gamma large chain</fullName>
    </alternativeName>
    <alternativeName>
        <fullName>Clathrin assembly protein large gamma chain</fullName>
    </alternativeName>
    <alternativeName>
        <fullName>Gamma-adaptin</fullName>
        <shortName>Gamma-ADA</shortName>
    </alternativeName>
</protein>
<accession>Q99128</accession>
<accession>A0A0D1CH08</accession>
<accession>Q4PGV3</accession>